<comment type="function">
    <text evidence="1">Peptide chain release factor 2 directs the termination of translation in response to the peptide chain termination codons UGA and UAA.</text>
</comment>
<comment type="subcellular location">
    <subcellularLocation>
        <location evidence="1">Cytoplasm</location>
    </subcellularLocation>
</comment>
<comment type="PTM">
    <text evidence="1">Methylated by PrmC. Methylation increases the termination efficiency of RF2 (By similarity).</text>
</comment>
<comment type="miscellaneous">
    <text evidence="1">The gene for this protein contains a UGA in-frame termination codon after Leu-24; a naturally occurring frameshift enables complete translation of RF-2. This provides a mechanism for the protein to regulate its own production (By similarity).</text>
</comment>
<comment type="similarity">
    <text evidence="2">Belongs to the prokaryotic/mitochondrial release factor family.</text>
</comment>
<evidence type="ECO:0000250" key="1"/>
<evidence type="ECO:0000305" key="2"/>
<organism>
    <name type="scientific">Buchnera aphidicola subsp. Schizaphis graminum (strain Sg)</name>
    <dbReference type="NCBI Taxonomy" id="198804"/>
    <lineage>
        <taxon>Bacteria</taxon>
        <taxon>Pseudomonadati</taxon>
        <taxon>Pseudomonadota</taxon>
        <taxon>Gammaproteobacteria</taxon>
        <taxon>Enterobacterales</taxon>
        <taxon>Erwiniaceae</taxon>
        <taxon>Buchnera</taxon>
    </lineage>
</organism>
<accession>P59102</accession>
<gene>
    <name type="primary">prfB</name>
    <name type="ordered locus">BUsg_421</name>
</gene>
<name>RF2_BUCAP</name>
<keyword id="KW-0963">Cytoplasm</keyword>
<keyword id="KW-0488">Methylation</keyword>
<keyword id="KW-0648">Protein biosynthesis</keyword>
<keyword id="KW-0688">Ribosomal frameshifting</keyword>
<sequence>MEINIITNKINKLIQRKKDLKRYLDYVAKSTRILEIDLELSSTEIWKKKEYVHNLNKEKNLLNIIINKINNIEKNIKEMIIFLDLAIETKDNAIIQEISEEIKKIAEKIQELEFYRMFSNQHDHCNCYIDVQAGSGGVDAQDWSKILLRMYLKWSDKKGFKTEIIEESTGEIVGIKSSTIKVSGQYAFGWLRTETGIHRLIRKSPFDSGKRRHTSFSSIFIYPDIEDKINIEINPSDLRIDVYRASGAGGQHVNRTESAVRITHLPTNIVTQCQNNRSQHKNKEQAIKQMKSKLYEMKIKEKKEKQKKIEKNKSDISWGNQIRSYILDNSKIKDLRTGVEKYNVQSVLDGDLDDFIEQSLIMGL</sequence>
<dbReference type="EMBL" id="AE013218">
    <property type="status" value="NOT_ANNOTATED_CDS"/>
    <property type="molecule type" value="Genomic_DNA"/>
</dbReference>
<dbReference type="RefSeq" id="WP_108926791.1">
    <property type="nucleotide sequence ID" value="NC_004061.1"/>
</dbReference>
<dbReference type="SMR" id="P59102"/>
<dbReference type="GeneID" id="93003893"/>
<dbReference type="Proteomes" id="UP000000416">
    <property type="component" value="Chromosome"/>
</dbReference>
<dbReference type="GO" id="GO:0005737">
    <property type="term" value="C:cytoplasm"/>
    <property type="evidence" value="ECO:0007669"/>
    <property type="project" value="UniProtKB-SubCell"/>
</dbReference>
<dbReference type="GO" id="GO:0016149">
    <property type="term" value="F:translation release factor activity, codon specific"/>
    <property type="evidence" value="ECO:0007669"/>
    <property type="project" value="UniProtKB-UniRule"/>
</dbReference>
<dbReference type="GO" id="GO:0075523">
    <property type="term" value="P:viral translational frameshifting"/>
    <property type="evidence" value="ECO:0007669"/>
    <property type="project" value="UniProtKB-KW"/>
</dbReference>
<dbReference type="FunFam" id="3.30.160.20:FF:000010">
    <property type="entry name" value="Peptide chain release factor 2"/>
    <property type="match status" value="1"/>
</dbReference>
<dbReference type="Gene3D" id="3.30.160.20">
    <property type="match status" value="1"/>
</dbReference>
<dbReference type="Gene3D" id="3.30.70.1660">
    <property type="match status" value="1"/>
</dbReference>
<dbReference type="Gene3D" id="1.20.58.410">
    <property type="entry name" value="Release factor"/>
    <property type="match status" value="1"/>
</dbReference>
<dbReference type="HAMAP" id="MF_00094">
    <property type="entry name" value="Rel_fac_2"/>
    <property type="match status" value="1"/>
</dbReference>
<dbReference type="InterPro" id="IPR005139">
    <property type="entry name" value="PCRF"/>
</dbReference>
<dbReference type="InterPro" id="IPR000352">
    <property type="entry name" value="Pep_chain_release_fac_I"/>
</dbReference>
<dbReference type="InterPro" id="IPR045853">
    <property type="entry name" value="Pep_chain_release_fac_I_sf"/>
</dbReference>
<dbReference type="InterPro" id="IPR004374">
    <property type="entry name" value="PrfB"/>
</dbReference>
<dbReference type="NCBIfam" id="TIGR00020">
    <property type="entry name" value="prfB"/>
    <property type="match status" value="1"/>
</dbReference>
<dbReference type="PANTHER" id="PTHR43116:SF3">
    <property type="entry name" value="CLASS I PEPTIDE CHAIN RELEASE FACTOR"/>
    <property type="match status" value="1"/>
</dbReference>
<dbReference type="PANTHER" id="PTHR43116">
    <property type="entry name" value="PEPTIDE CHAIN RELEASE FACTOR 2"/>
    <property type="match status" value="1"/>
</dbReference>
<dbReference type="Pfam" id="PF03462">
    <property type="entry name" value="PCRF"/>
    <property type="match status" value="1"/>
</dbReference>
<dbReference type="Pfam" id="PF00472">
    <property type="entry name" value="RF-1"/>
    <property type="match status" value="1"/>
</dbReference>
<dbReference type="SMART" id="SM00937">
    <property type="entry name" value="PCRF"/>
    <property type="match status" value="1"/>
</dbReference>
<dbReference type="SUPFAM" id="SSF75620">
    <property type="entry name" value="Release factor"/>
    <property type="match status" value="1"/>
</dbReference>
<dbReference type="PROSITE" id="PS00745">
    <property type="entry name" value="RF_PROK_I"/>
    <property type="match status" value="1"/>
</dbReference>
<protein>
    <recommendedName>
        <fullName>Peptide chain release factor 2</fullName>
        <shortName>RF-2</shortName>
    </recommendedName>
</protein>
<reference key="1">
    <citation type="journal article" date="2002" name="Science">
        <title>50 million years of genomic stasis in endosymbiotic bacteria.</title>
        <authorList>
            <person name="Tamas I."/>
            <person name="Klasson L."/>
            <person name="Canbaeck B."/>
            <person name="Naeslund A.K."/>
            <person name="Eriksson A.-S."/>
            <person name="Wernegreen J.J."/>
            <person name="Sandstroem J.P."/>
            <person name="Moran N.A."/>
            <person name="Andersson S.G.E."/>
        </authorList>
    </citation>
    <scope>NUCLEOTIDE SEQUENCE [LARGE SCALE GENOMIC DNA]</scope>
    <source>
        <strain>Sg</strain>
    </source>
</reference>
<proteinExistence type="inferred from homology"/>
<feature type="chain" id="PRO_0000166806" description="Peptide chain release factor 2">
    <location>
        <begin position="1"/>
        <end position="364"/>
    </location>
</feature>
<feature type="modified residue" description="N5-methylglutamine" evidence="1">
    <location>
        <position position="251"/>
    </location>
</feature>